<proteinExistence type="inferred from homology"/>
<feature type="chain" id="PRO_1000200744" description="Peptide deformylase">
    <location>
        <begin position="1"/>
        <end position="185"/>
    </location>
</feature>
<feature type="active site" evidence="1">
    <location>
        <position position="153"/>
    </location>
</feature>
<feature type="binding site" evidence="1">
    <location>
        <position position="109"/>
    </location>
    <ligand>
        <name>Fe cation</name>
        <dbReference type="ChEBI" id="CHEBI:24875"/>
    </ligand>
</feature>
<feature type="binding site" evidence="1">
    <location>
        <position position="152"/>
    </location>
    <ligand>
        <name>Fe cation</name>
        <dbReference type="ChEBI" id="CHEBI:24875"/>
    </ligand>
</feature>
<feature type="binding site" evidence="1">
    <location>
        <position position="156"/>
    </location>
    <ligand>
        <name>Fe cation</name>
        <dbReference type="ChEBI" id="CHEBI:24875"/>
    </ligand>
</feature>
<reference key="1">
    <citation type="submission" date="2007-08" db="EMBL/GenBank/DDBJ databases">
        <title>Complete sequence of Roseiflexus castenholzii DSM 13941.</title>
        <authorList>
            <consortium name="US DOE Joint Genome Institute"/>
            <person name="Copeland A."/>
            <person name="Lucas S."/>
            <person name="Lapidus A."/>
            <person name="Barry K."/>
            <person name="Glavina del Rio T."/>
            <person name="Dalin E."/>
            <person name="Tice H."/>
            <person name="Pitluck S."/>
            <person name="Thompson L.S."/>
            <person name="Brettin T."/>
            <person name="Bruce D."/>
            <person name="Detter J.C."/>
            <person name="Han C."/>
            <person name="Tapia R."/>
            <person name="Schmutz J."/>
            <person name="Larimer F."/>
            <person name="Land M."/>
            <person name="Hauser L."/>
            <person name="Kyrpides N."/>
            <person name="Mikhailova N."/>
            <person name="Bryant D.A."/>
            <person name="Hanada S."/>
            <person name="Tsukatani Y."/>
            <person name="Richardson P."/>
        </authorList>
    </citation>
    <scope>NUCLEOTIDE SEQUENCE [LARGE SCALE GENOMIC DNA]</scope>
    <source>
        <strain>DSM 13941 / HLO8</strain>
    </source>
</reference>
<name>DEF_ROSCS</name>
<accession>A7NPM9</accession>
<dbReference type="EC" id="3.5.1.88" evidence="1"/>
<dbReference type="EMBL" id="CP000804">
    <property type="protein sequence ID" value="ABU59525.1"/>
    <property type="molecule type" value="Genomic_DNA"/>
</dbReference>
<dbReference type="RefSeq" id="WP_012121948.1">
    <property type="nucleotide sequence ID" value="NC_009767.1"/>
</dbReference>
<dbReference type="SMR" id="A7NPM9"/>
<dbReference type="STRING" id="383372.Rcas_3475"/>
<dbReference type="KEGG" id="rca:Rcas_3475"/>
<dbReference type="eggNOG" id="COG0242">
    <property type="taxonomic scope" value="Bacteria"/>
</dbReference>
<dbReference type="HOGENOM" id="CLU_061901_4_2_0"/>
<dbReference type="OrthoDB" id="9784988at2"/>
<dbReference type="Proteomes" id="UP000000263">
    <property type="component" value="Chromosome"/>
</dbReference>
<dbReference type="GO" id="GO:0046872">
    <property type="term" value="F:metal ion binding"/>
    <property type="evidence" value="ECO:0007669"/>
    <property type="project" value="UniProtKB-KW"/>
</dbReference>
<dbReference type="GO" id="GO:0042586">
    <property type="term" value="F:peptide deformylase activity"/>
    <property type="evidence" value="ECO:0007669"/>
    <property type="project" value="UniProtKB-UniRule"/>
</dbReference>
<dbReference type="GO" id="GO:0043686">
    <property type="term" value="P:co-translational protein modification"/>
    <property type="evidence" value="ECO:0007669"/>
    <property type="project" value="TreeGrafter"/>
</dbReference>
<dbReference type="GO" id="GO:0006412">
    <property type="term" value="P:translation"/>
    <property type="evidence" value="ECO:0007669"/>
    <property type="project" value="UniProtKB-UniRule"/>
</dbReference>
<dbReference type="CDD" id="cd00487">
    <property type="entry name" value="Pep_deformylase"/>
    <property type="match status" value="1"/>
</dbReference>
<dbReference type="Gene3D" id="3.90.45.10">
    <property type="entry name" value="Peptide deformylase"/>
    <property type="match status" value="1"/>
</dbReference>
<dbReference type="HAMAP" id="MF_00163">
    <property type="entry name" value="Pep_deformylase"/>
    <property type="match status" value="1"/>
</dbReference>
<dbReference type="InterPro" id="IPR023635">
    <property type="entry name" value="Peptide_deformylase"/>
</dbReference>
<dbReference type="InterPro" id="IPR036821">
    <property type="entry name" value="Peptide_deformylase_sf"/>
</dbReference>
<dbReference type="NCBIfam" id="TIGR00079">
    <property type="entry name" value="pept_deformyl"/>
    <property type="match status" value="1"/>
</dbReference>
<dbReference type="NCBIfam" id="NF001159">
    <property type="entry name" value="PRK00150.1-3"/>
    <property type="match status" value="1"/>
</dbReference>
<dbReference type="PANTHER" id="PTHR10458">
    <property type="entry name" value="PEPTIDE DEFORMYLASE"/>
    <property type="match status" value="1"/>
</dbReference>
<dbReference type="PANTHER" id="PTHR10458:SF22">
    <property type="entry name" value="PEPTIDE DEFORMYLASE"/>
    <property type="match status" value="1"/>
</dbReference>
<dbReference type="Pfam" id="PF01327">
    <property type="entry name" value="Pep_deformylase"/>
    <property type="match status" value="1"/>
</dbReference>
<dbReference type="PIRSF" id="PIRSF004749">
    <property type="entry name" value="Pep_def"/>
    <property type="match status" value="1"/>
</dbReference>
<dbReference type="PRINTS" id="PR01576">
    <property type="entry name" value="PDEFORMYLASE"/>
</dbReference>
<dbReference type="SUPFAM" id="SSF56420">
    <property type="entry name" value="Peptide deformylase"/>
    <property type="match status" value="1"/>
</dbReference>
<comment type="function">
    <text evidence="1">Removes the formyl group from the N-terminal Met of newly synthesized proteins. Requires at least a dipeptide for an efficient rate of reaction. N-terminal L-methionine is a prerequisite for activity but the enzyme has broad specificity at other positions.</text>
</comment>
<comment type="catalytic activity">
    <reaction evidence="1">
        <text>N-terminal N-formyl-L-methionyl-[peptide] + H2O = N-terminal L-methionyl-[peptide] + formate</text>
        <dbReference type="Rhea" id="RHEA:24420"/>
        <dbReference type="Rhea" id="RHEA-COMP:10639"/>
        <dbReference type="Rhea" id="RHEA-COMP:10640"/>
        <dbReference type="ChEBI" id="CHEBI:15377"/>
        <dbReference type="ChEBI" id="CHEBI:15740"/>
        <dbReference type="ChEBI" id="CHEBI:49298"/>
        <dbReference type="ChEBI" id="CHEBI:64731"/>
        <dbReference type="EC" id="3.5.1.88"/>
    </reaction>
</comment>
<comment type="cofactor">
    <cofactor evidence="1">
        <name>Fe(2+)</name>
        <dbReference type="ChEBI" id="CHEBI:29033"/>
    </cofactor>
    <text evidence="1">Binds 1 Fe(2+) ion.</text>
</comment>
<comment type="similarity">
    <text evidence="1">Belongs to the polypeptide deformylase family.</text>
</comment>
<protein>
    <recommendedName>
        <fullName evidence="1">Peptide deformylase</fullName>
        <shortName evidence="1">PDF</shortName>
        <ecNumber evidence="1">3.5.1.88</ecNumber>
    </recommendedName>
    <alternativeName>
        <fullName evidence="1">Polypeptide deformylase</fullName>
    </alternativeName>
</protein>
<evidence type="ECO:0000255" key="1">
    <source>
        <dbReference type="HAMAP-Rule" id="MF_00163"/>
    </source>
</evidence>
<gene>
    <name evidence="1" type="primary">def</name>
    <name type="ordered locus">Rcas_3475</name>
</gene>
<keyword id="KW-0378">Hydrolase</keyword>
<keyword id="KW-0408">Iron</keyword>
<keyword id="KW-0479">Metal-binding</keyword>
<keyword id="KW-0648">Protein biosynthesis</keyword>
<keyword id="KW-1185">Reference proteome</keyword>
<sequence>MGLRHILRIDNPDEKKILTTRCHPVRMPNPSLKQLVADMFETMHAANGVGLAAPQIGVTQRLAVIAIPPMMEERPDGTKVEVAPEQTFVLINPEIVKASDQEDVGLEGCLSLPGWYGEVPRAAWVTVEYTDLNGRRQRIRRATGLLARALQHEIDHLDGVLFTERIRDLSTLKSYSEEEAPATTG</sequence>
<organism>
    <name type="scientific">Roseiflexus castenholzii (strain DSM 13941 / HLO8)</name>
    <dbReference type="NCBI Taxonomy" id="383372"/>
    <lineage>
        <taxon>Bacteria</taxon>
        <taxon>Bacillati</taxon>
        <taxon>Chloroflexota</taxon>
        <taxon>Chloroflexia</taxon>
        <taxon>Chloroflexales</taxon>
        <taxon>Roseiflexineae</taxon>
        <taxon>Roseiflexaceae</taxon>
        <taxon>Roseiflexus</taxon>
    </lineage>
</organism>